<comment type="function">
    <text evidence="4">Probably a minor component of the bacterial microcompartment (BMC) shell dedicated to ethanolamine degradation. It might bind nucleic acids.</text>
</comment>
<comment type="pathway">
    <text>Amine and polyamine degradation; ethanolamine degradation.</text>
</comment>
<comment type="subunit">
    <text evidence="3">Monomeric in solution.</text>
</comment>
<comment type="subcellular location">
    <subcellularLocation>
        <location evidence="4">Bacterial microcompartment</location>
    </subcellularLocation>
</comment>
<comment type="similarity">
    <text evidence="1">Belongs to the bacterial microcompartments protein family.</text>
</comment>
<comment type="caution">
    <text evidence="5">In strain MG1655 the eut operon is interrupted by the CPZ-55 prophage, encoding 9 genes situated between eutA and eutB, which are translated in the other direction. CPZ-55 may prevent expression of the eut operon in strain MG1655. Strain W3110 does not have this prophage element and should be able to express the operon.</text>
</comment>
<organism>
    <name type="scientific">Escherichia coli (strain K12)</name>
    <dbReference type="NCBI Taxonomy" id="83333"/>
    <lineage>
        <taxon>Bacteria</taxon>
        <taxon>Pseudomonadati</taxon>
        <taxon>Pseudomonadota</taxon>
        <taxon>Gammaproteobacteria</taxon>
        <taxon>Enterobacterales</taxon>
        <taxon>Enterobacteriaceae</taxon>
        <taxon>Escherichia</taxon>
    </lineage>
</organism>
<feature type="chain" id="PRO_0000004784" description="Bacterial microcompartment shell protein EutK">
    <location>
        <begin position="1"/>
        <end position="166"/>
    </location>
</feature>
<feature type="domain" description="BMC" evidence="1">
    <location>
        <begin position="4"/>
        <end position="88"/>
    </location>
</feature>
<feature type="domain" description="EutK-Ctail" evidence="2">
    <location>
        <begin position="109"/>
        <end position="165"/>
    </location>
</feature>
<feature type="helix" evidence="7">
    <location>
        <begin position="112"/>
        <end position="120"/>
    </location>
</feature>
<feature type="helix" evidence="7">
    <location>
        <begin position="127"/>
        <end position="134"/>
    </location>
</feature>
<feature type="helix" evidence="7">
    <location>
        <begin position="138"/>
        <end position="150"/>
    </location>
</feature>
<feature type="strand" evidence="7">
    <location>
        <begin position="153"/>
        <end position="157"/>
    </location>
</feature>
<feature type="strand" evidence="7">
    <location>
        <begin position="160"/>
        <end position="163"/>
    </location>
</feature>
<keyword id="KW-0002">3D-structure</keyword>
<keyword id="KW-1283">Bacterial microcompartment</keyword>
<keyword id="KW-1185">Reference proteome</keyword>
<dbReference type="EMBL" id="U00096">
    <property type="protein sequence ID" value="AAC75491.2"/>
    <property type="molecule type" value="Genomic_DNA"/>
</dbReference>
<dbReference type="EMBL" id="AP009048">
    <property type="protein sequence ID" value="BAA16321.1"/>
    <property type="molecule type" value="Genomic_DNA"/>
</dbReference>
<dbReference type="PIR" id="E65018">
    <property type="entry name" value="E65018"/>
</dbReference>
<dbReference type="RefSeq" id="NP_416933.4">
    <property type="nucleotide sequence ID" value="NC_000913.3"/>
</dbReference>
<dbReference type="RefSeq" id="WP_000606257.1">
    <property type="nucleotide sequence ID" value="NZ_STEB01000039.1"/>
</dbReference>
<dbReference type="PDB" id="3I71">
    <property type="method" value="X-ray"/>
    <property type="resolution" value="2.10 A"/>
    <property type="chains" value="A/B=108-166"/>
</dbReference>
<dbReference type="PDBsum" id="3I71"/>
<dbReference type="SMR" id="P76540"/>
<dbReference type="BioGRID" id="4261890">
    <property type="interactions" value="5"/>
</dbReference>
<dbReference type="BioGRID" id="851251">
    <property type="interactions" value="2"/>
</dbReference>
<dbReference type="FunCoup" id="P76540">
    <property type="interactions" value="14"/>
</dbReference>
<dbReference type="IntAct" id="P76540">
    <property type="interactions" value="8"/>
</dbReference>
<dbReference type="STRING" id="511145.b2438"/>
<dbReference type="PaxDb" id="511145-b2438"/>
<dbReference type="EnsemblBacteria" id="AAC75491">
    <property type="protein sequence ID" value="AAC75491"/>
    <property type="gene ID" value="b2438"/>
</dbReference>
<dbReference type="GeneID" id="75204292"/>
<dbReference type="GeneID" id="946912"/>
<dbReference type="KEGG" id="ecj:JW2431"/>
<dbReference type="KEGG" id="eco:b2438"/>
<dbReference type="KEGG" id="ecoc:C3026_13540"/>
<dbReference type="PATRIC" id="fig|1411691.4.peg.4293"/>
<dbReference type="EchoBASE" id="EB3922"/>
<dbReference type="eggNOG" id="COG4577">
    <property type="taxonomic scope" value="Bacteria"/>
</dbReference>
<dbReference type="HOGENOM" id="CLU_064903_7_0_6"/>
<dbReference type="InParanoid" id="P76540"/>
<dbReference type="OMA" id="WLIGGFK"/>
<dbReference type="OrthoDB" id="9812608at2"/>
<dbReference type="BioCyc" id="EcoCyc:G7270-MONOMER"/>
<dbReference type="UniPathway" id="UPA00560"/>
<dbReference type="EvolutionaryTrace" id="P76540"/>
<dbReference type="PRO" id="PR:P76540"/>
<dbReference type="Proteomes" id="UP000000625">
    <property type="component" value="Chromosome"/>
</dbReference>
<dbReference type="GO" id="GO:0031471">
    <property type="term" value="C:ethanolamine degradation polyhedral organelle"/>
    <property type="evidence" value="ECO:0000250"/>
    <property type="project" value="EcoCyc"/>
</dbReference>
<dbReference type="GO" id="GO:0005198">
    <property type="term" value="F:structural molecule activity"/>
    <property type="evidence" value="ECO:0000250"/>
    <property type="project" value="EcoCyc"/>
</dbReference>
<dbReference type="GO" id="GO:0046336">
    <property type="term" value="P:ethanolamine catabolic process"/>
    <property type="evidence" value="ECO:0007669"/>
    <property type="project" value="UniProtKB-UniPathway"/>
</dbReference>
<dbReference type="GO" id="GO:0010165">
    <property type="term" value="P:response to X-ray"/>
    <property type="evidence" value="ECO:0000315"/>
    <property type="project" value="EcoCyc"/>
</dbReference>
<dbReference type="CDD" id="cd07045">
    <property type="entry name" value="BMC_CcmK_like"/>
    <property type="match status" value="1"/>
</dbReference>
<dbReference type="Gene3D" id="3.30.70.1710">
    <property type="match status" value="1"/>
</dbReference>
<dbReference type="Gene3D" id="1.10.10.10">
    <property type="entry name" value="Winged helix-like DNA-binding domain superfamily/Winged helix DNA-binding domain"/>
    <property type="match status" value="1"/>
</dbReference>
<dbReference type="InterPro" id="IPR020808">
    <property type="entry name" value="Bact_microcomp_CS"/>
</dbReference>
<dbReference type="InterPro" id="IPR000249">
    <property type="entry name" value="BMC_dom"/>
</dbReference>
<dbReference type="InterPro" id="IPR050575">
    <property type="entry name" value="BMC_shell"/>
</dbReference>
<dbReference type="InterPro" id="IPR037233">
    <property type="entry name" value="CcmK-like_sf"/>
</dbReference>
<dbReference type="InterPro" id="IPR044872">
    <property type="entry name" value="CcmK/CsoS1_BMC"/>
</dbReference>
<dbReference type="InterPro" id="IPR032298">
    <property type="entry name" value="EutK_C"/>
</dbReference>
<dbReference type="InterPro" id="IPR036388">
    <property type="entry name" value="WH-like_DNA-bd_sf"/>
</dbReference>
<dbReference type="NCBIfam" id="NF012010">
    <property type="entry name" value="PRK15466.1"/>
    <property type="match status" value="1"/>
</dbReference>
<dbReference type="PANTHER" id="PTHR33941:SF6">
    <property type="entry name" value="BACTERIAL MICROCOMPARTMENT SHELL PROTEIN EUTK"/>
    <property type="match status" value="1"/>
</dbReference>
<dbReference type="PANTHER" id="PTHR33941">
    <property type="entry name" value="PROPANEDIOL UTILIZATION PROTEIN PDUA"/>
    <property type="match status" value="1"/>
</dbReference>
<dbReference type="Pfam" id="PF00936">
    <property type="entry name" value="BMC"/>
    <property type="match status" value="1"/>
</dbReference>
<dbReference type="Pfam" id="PF16365">
    <property type="entry name" value="EutK_C"/>
    <property type="match status" value="1"/>
</dbReference>
<dbReference type="SMART" id="SM00877">
    <property type="entry name" value="BMC"/>
    <property type="match status" value="1"/>
</dbReference>
<dbReference type="SUPFAM" id="SSF143414">
    <property type="entry name" value="CcmK-like"/>
    <property type="match status" value="1"/>
</dbReference>
<dbReference type="PROSITE" id="PS01139">
    <property type="entry name" value="BMC_1"/>
    <property type="match status" value="1"/>
</dbReference>
<dbReference type="PROSITE" id="PS51930">
    <property type="entry name" value="BMC_2"/>
    <property type="match status" value="1"/>
</dbReference>
<dbReference type="PROSITE" id="PS51933">
    <property type="entry name" value="EUTK_C"/>
    <property type="match status" value="1"/>
</dbReference>
<proteinExistence type="evidence at protein level"/>
<reference key="1">
    <citation type="journal article" date="1997" name="DNA Res.">
        <title>Construction of a contiguous 874-kb sequence of the Escherichia coli-K12 genome corresponding to 50.0-68.8 min on the linkage map and analysis of its sequence features.</title>
        <authorList>
            <person name="Yamamoto Y."/>
            <person name="Aiba H."/>
            <person name="Baba T."/>
            <person name="Hayashi K."/>
            <person name="Inada T."/>
            <person name="Isono K."/>
            <person name="Itoh T."/>
            <person name="Kimura S."/>
            <person name="Kitagawa M."/>
            <person name="Makino K."/>
            <person name="Miki T."/>
            <person name="Mitsuhashi N."/>
            <person name="Mizobuchi K."/>
            <person name="Mori H."/>
            <person name="Nakade S."/>
            <person name="Nakamura Y."/>
            <person name="Nashimoto H."/>
            <person name="Oshima T."/>
            <person name="Oyama S."/>
            <person name="Saito N."/>
            <person name="Sampei G."/>
            <person name="Satoh Y."/>
            <person name="Sivasundaram S."/>
            <person name="Tagami H."/>
            <person name="Takahashi H."/>
            <person name="Takeda J."/>
            <person name="Takemoto K."/>
            <person name="Uehara K."/>
            <person name="Wada C."/>
            <person name="Yamagata S."/>
            <person name="Horiuchi T."/>
        </authorList>
    </citation>
    <scope>NUCLEOTIDE SEQUENCE [LARGE SCALE GENOMIC DNA]</scope>
    <source>
        <strain>K12 / W3110 / ATCC 27325 / DSM 5911</strain>
    </source>
</reference>
<reference key="2">
    <citation type="journal article" date="1997" name="Science">
        <title>The complete genome sequence of Escherichia coli K-12.</title>
        <authorList>
            <person name="Blattner F.R."/>
            <person name="Plunkett G. III"/>
            <person name="Bloch C.A."/>
            <person name="Perna N.T."/>
            <person name="Burland V."/>
            <person name="Riley M."/>
            <person name="Collado-Vides J."/>
            <person name="Glasner J.D."/>
            <person name="Rode C.K."/>
            <person name="Mayhew G.F."/>
            <person name="Gregor J."/>
            <person name="Davis N.W."/>
            <person name="Kirkpatrick H.A."/>
            <person name="Goeden M.A."/>
            <person name="Rose D.J."/>
            <person name="Mau B."/>
            <person name="Shao Y."/>
        </authorList>
    </citation>
    <scope>NUCLEOTIDE SEQUENCE [LARGE SCALE GENOMIC DNA]</scope>
    <source>
        <strain>K12 / MG1655 / ATCC 47076</strain>
    </source>
</reference>
<reference key="3">
    <citation type="journal article" date="2006" name="Mol. Syst. Biol.">
        <title>Highly accurate genome sequences of Escherichia coli K-12 strains MG1655 and W3110.</title>
        <authorList>
            <person name="Hayashi K."/>
            <person name="Morooka N."/>
            <person name="Yamamoto Y."/>
            <person name="Fujita K."/>
            <person name="Isono K."/>
            <person name="Choi S."/>
            <person name="Ohtsubo E."/>
            <person name="Baba T."/>
            <person name="Wanner B.L."/>
            <person name="Mori H."/>
            <person name="Horiuchi T."/>
        </authorList>
    </citation>
    <scope>NUCLEOTIDE SEQUENCE [LARGE SCALE GENOMIC DNA]</scope>
    <source>
        <strain>K12 / W3110 / ATCC 27325 / DSM 5911</strain>
    </source>
</reference>
<reference evidence="6" key="4">
    <citation type="journal article" date="2010" name="Science">
        <title>Structure and mechanisms of a protein-based organelle in Escherichia coli.</title>
        <authorList>
            <person name="Tanaka S."/>
            <person name="Sawaya M.R."/>
            <person name="Yeates T.O."/>
        </authorList>
    </citation>
    <scope>X-RAY CRYSTALLOGRAPHY (2.10 ANGSTROMS) OF 108-166</scope>
    <scope>FUNCTION</scope>
    <scope>SUBUNIT</scope>
    <scope>SUBCELLULAR LOCATION</scope>
</reference>
<evidence type="ECO:0000255" key="1">
    <source>
        <dbReference type="PROSITE-ProRule" id="PRU01278"/>
    </source>
</evidence>
<evidence type="ECO:0000255" key="2">
    <source>
        <dbReference type="PROSITE-ProRule" id="PRU01281"/>
    </source>
</evidence>
<evidence type="ECO:0000269" key="3">
    <source>
    </source>
</evidence>
<evidence type="ECO:0000305" key="4">
    <source>
    </source>
</evidence>
<evidence type="ECO:0000305" key="5">
    <source>
    </source>
</evidence>
<evidence type="ECO:0007744" key="6">
    <source>
        <dbReference type="PDB" id="3I71"/>
    </source>
</evidence>
<evidence type="ECO:0007829" key="7">
    <source>
        <dbReference type="PDB" id="3I71"/>
    </source>
</evidence>
<sequence length="166" mass="17893">MINALGLLEVDGMVAAIDAADAMLKAANVRLLSHEVLDPGRLTLVVEGDLAACRAALDAGCAAAMRTGRVISRKEIGRPDDDTQWLVTGFNRQPKQPVREPDAPVIVAESADELLALLTSVRQGMTAGEVAAHFGWPLEKARNALEQLFSAGTLRKRSSRYRLKPH</sequence>
<accession>P76540</accession>
<accession>P77408</accession>
<name>EUTK_ECOLI</name>
<protein>
    <recommendedName>
        <fullName>Bacterial microcompartment shell protein EutK</fullName>
    </recommendedName>
    <alternativeName>
        <fullName>Ethanolamine utilization protein EutK</fullName>
    </alternativeName>
</protein>
<gene>
    <name type="primary">eutK</name>
    <name type="synonym">yffI</name>
    <name type="ordered locus">b2438</name>
    <name type="ordered locus">JW2431</name>
</gene>